<protein>
    <recommendedName>
        <fullName evidence="1">Tyrosine--tRNA ligase</fullName>
        <ecNumber evidence="1">6.1.1.1</ecNumber>
    </recommendedName>
    <alternativeName>
        <fullName evidence="1">Tyrosyl-tRNA synthetase</fullName>
        <shortName evidence="1">TyrRS</shortName>
    </alternativeName>
</protein>
<keyword id="KW-0030">Aminoacyl-tRNA synthetase</keyword>
<keyword id="KW-0067">ATP-binding</keyword>
<keyword id="KW-0963">Cytoplasm</keyword>
<keyword id="KW-0436">Ligase</keyword>
<keyword id="KW-0547">Nucleotide-binding</keyword>
<keyword id="KW-0648">Protein biosynthesis</keyword>
<keyword id="KW-1185">Reference proteome</keyword>
<keyword id="KW-0694">RNA-binding</keyword>
<gene>
    <name evidence="1" type="primary">tyrS</name>
    <name type="ordered locus">FP0161</name>
</gene>
<sequence>MKNLVEELKWRGLFHDMMPGTEEQLTKESTTAYIGFDPTADSLHIGSMVQIILLVHLKNFGHKPIALIGGATGMIGDPSGKSDERNLLDEATLNKNVAGIKAVLSSFLDFNTTNANAPILVNNYDWMKDFSFIDFARDIGKRITVNYMMSKDSVKKRLGAEGEGMSFTEFTYQLIQGYDFQYLYKNHNCLLQMGGSDQWGNITTGTELVRRMGGEGAKAYALTTPLITKADGSKFGKSEGGNVWLTADKTSVYKFYQFWLNTSDDDAEKYIKIFTFLDKNTIDGLIEEHKTAPHLRVLQRKLTEEITILVHGKEELEKAIKASNILFGNSTSNDLKGLDAATFLEIFDGVPQAEISKTDIEAGINIVEVLNEKSGFLKSNGEARRALSANSIAVNKEKVTEEFTLTTKDMINNQFVLLQSGKKNYFVLNVK</sequence>
<name>SYY_FLAPJ</name>
<dbReference type="EC" id="6.1.1.1" evidence="1"/>
<dbReference type="EMBL" id="AM398681">
    <property type="protein sequence ID" value="CAL42277.1"/>
    <property type="molecule type" value="Genomic_DNA"/>
</dbReference>
<dbReference type="RefSeq" id="WP_011962338.1">
    <property type="nucleotide sequence ID" value="NC_009613.3"/>
</dbReference>
<dbReference type="RefSeq" id="YP_001295097.1">
    <property type="nucleotide sequence ID" value="NC_009613.3"/>
</dbReference>
<dbReference type="SMR" id="A6GW04"/>
<dbReference type="STRING" id="402612.FP0161"/>
<dbReference type="EnsemblBacteria" id="CAL42277">
    <property type="protein sequence ID" value="CAL42277"/>
    <property type="gene ID" value="FP0161"/>
</dbReference>
<dbReference type="GeneID" id="66553786"/>
<dbReference type="KEGG" id="fps:FP0161"/>
<dbReference type="PATRIC" id="fig|402612.5.peg.168"/>
<dbReference type="eggNOG" id="COG0162">
    <property type="taxonomic scope" value="Bacteria"/>
</dbReference>
<dbReference type="HOGENOM" id="CLU_024003_0_3_10"/>
<dbReference type="OrthoDB" id="9804243at2"/>
<dbReference type="Proteomes" id="UP000006394">
    <property type="component" value="Chromosome"/>
</dbReference>
<dbReference type="GO" id="GO:0005829">
    <property type="term" value="C:cytosol"/>
    <property type="evidence" value="ECO:0007669"/>
    <property type="project" value="TreeGrafter"/>
</dbReference>
<dbReference type="GO" id="GO:0005524">
    <property type="term" value="F:ATP binding"/>
    <property type="evidence" value="ECO:0007669"/>
    <property type="project" value="UniProtKB-UniRule"/>
</dbReference>
<dbReference type="GO" id="GO:0003723">
    <property type="term" value="F:RNA binding"/>
    <property type="evidence" value="ECO:0007669"/>
    <property type="project" value="UniProtKB-KW"/>
</dbReference>
<dbReference type="GO" id="GO:0004831">
    <property type="term" value="F:tyrosine-tRNA ligase activity"/>
    <property type="evidence" value="ECO:0007669"/>
    <property type="project" value="UniProtKB-UniRule"/>
</dbReference>
<dbReference type="GO" id="GO:0006437">
    <property type="term" value="P:tyrosyl-tRNA aminoacylation"/>
    <property type="evidence" value="ECO:0007669"/>
    <property type="project" value="UniProtKB-UniRule"/>
</dbReference>
<dbReference type="CDD" id="cd00165">
    <property type="entry name" value="S4"/>
    <property type="match status" value="1"/>
</dbReference>
<dbReference type="CDD" id="cd00805">
    <property type="entry name" value="TyrRS_core"/>
    <property type="match status" value="1"/>
</dbReference>
<dbReference type="FunFam" id="1.10.240.10:FF:000001">
    <property type="entry name" value="Tyrosine--tRNA ligase"/>
    <property type="match status" value="1"/>
</dbReference>
<dbReference type="FunFam" id="3.40.50.620:FF:000008">
    <property type="entry name" value="Tyrosine--tRNA ligase"/>
    <property type="match status" value="1"/>
</dbReference>
<dbReference type="Gene3D" id="3.40.50.620">
    <property type="entry name" value="HUPs"/>
    <property type="match status" value="1"/>
</dbReference>
<dbReference type="Gene3D" id="3.10.290.10">
    <property type="entry name" value="RNA-binding S4 domain"/>
    <property type="match status" value="1"/>
</dbReference>
<dbReference type="Gene3D" id="1.10.240.10">
    <property type="entry name" value="Tyrosyl-Transfer RNA Synthetase"/>
    <property type="match status" value="1"/>
</dbReference>
<dbReference type="HAMAP" id="MF_02006">
    <property type="entry name" value="Tyr_tRNA_synth_type1"/>
    <property type="match status" value="1"/>
</dbReference>
<dbReference type="InterPro" id="IPR002305">
    <property type="entry name" value="aa-tRNA-synth_Ic"/>
</dbReference>
<dbReference type="InterPro" id="IPR014729">
    <property type="entry name" value="Rossmann-like_a/b/a_fold"/>
</dbReference>
<dbReference type="InterPro" id="IPR036986">
    <property type="entry name" value="S4_RNA-bd_sf"/>
</dbReference>
<dbReference type="InterPro" id="IPR054608">
    <property type="entry name" value="SYY-like_C"/>
</dbReference>
<dbReference type="InterPro" id="IPR002307">
    <property type="entry name" value="Tyr-tRNA-ligase"/>
</dbReference>
<dbReference type="InterPro" id="IPR024088">
    <property type="entry name" value="Tyr-tRNA-ligase_bac-type"/>
</dbReference>
<dbReference type="InterPro" id="IPR024107">
    <property type="entry name" value="Tyr-tRNA-ligase_bac_1"/>
</dbReference>
<dbReference type="NCBIfam" id="TIGR00234">
    <property type="entry name" value="tyrS"/>
    <property type="match status" value="1"/>
</dbReference>
<dbReference type="PANTHER" id="PTHR11766:SF0">
    <property type="entry name" value="TYROSINE--TRNA LIGASE, MITOCHONDRIAL"/>
    <property type="match status" value="1"/>
</dbReference>
<dbReference type="PANTHER" id="PTHR11766">
    <property type="entry name" value="TYROSYL-TRNA SYNTHETASE"/>
    <property type="match status" value="1"/>
</dbReference>
<dbReference type="Pfam" id="PF22421">
    <property type="entry name" value="SYY_C-terminal"/>
    <property type="match status" value="1"/>
</dbReference>
<dbReference type="Pfam" id="PF00579">
    <property type="entry name" value="tRNA-synt_1b"/>
    <property type="match status" value="1"/>
</dbReference>
<dbReference type="PRINTS" id="PR01040">
    <property type="entry name" value="TRNASYNTHTYR"/>
</dbReference>
<dbReference type="SUPFAM" id="SSF55174">
    <property type="entry name" value="Alpha-L RNA-binding motif"/>
    <property type="match status" value="1"/>
</dbReference>
<dbReference type="SUPFAM" id="SSF52374">
    <property type="entry name" value="Nucleotidylyl transferase"/>
    <property type="match status" value="1"/>
</dbReference>
<dbReference type="PROSITE" id="PS50889">
    <property type="entry name" value="S4"/>
    <property type="match status" value="1"/>
</dbReference>
<comment type="function">
    <text evidence="1">Catalyzes the attachment of tyrosine to tRNA(Tyr) in a two-step reaction: tyrosine is first activated by ATP to form Tyr-AMP and then transferred to the acceptor end of tRNA(Tyr).</text>
</comment>
<comment type="catalytic activity">
    <reaction evidence="1">
        <text>tRNA(Tyr) + L-tyrosine + ATP = L-tyrosyl-tRNA(Tyr) + AMP + diphosphate + H(+)</text>
        <dbReference type="Rhea" id="RHEA:10220"/>
        <dbReference type="Rhea" id="RHEA-COMP:9706"/>
        <dbReference type="Rhea" id="RHEA-COMP:9707"/>
        <dbReference type="ChEBI" id="CHEBI:15378"/>
        <dbReference type="ChEBI" id="CHEBI:30616"/>
        <dbReference type="ChEBI" id="CHEBI:33019"/>
        <dbReference type="ChEBI" id="CHEBI:58315"/>
        <dbReference type="ChEBI" id="CHEBI:78442"/>
        <dbReference type="ChEBI" id="CHEBI:78536"/>
        <dbReference type="ChEBI" id="CHEBI:456215"/>
        <dbReference type="EC" id="6.1.1.1"/>
    </reaction>
</comment>
<comment type="subunit">
    <text evidence="1">Homodimer.</text>
</comment>
<comment type="subcellular location">
    <subcellularLocation>
        <location evidence="1">Cytoplasm</location>
    </subcellularLocation>
</comment>
<comment type="similarity">
    <text evidence="1">Belongs to the class-I aminoacyl-tRNA synthetase family. TyrS type 1 subfamily.</text>
</comment>
<organism>
    <name type="scientific">Flavobacterium psychrophilum (strain ATCC 49511 / DSM 21280 / CIP 103535 / JIP02/86)</name>
    <dbReference type="NCBI Taxonomy" id="402612"/>
    <lineage>
        <taxon>Bacteria</taxon>
        <taxon>Pseudomonadati</taxon>
        <taxon>Bacteroidota</taxon>
        <taxon>Flavobacteriia</taxon>
        <taxon>Flavobacteriales</taxon>
        <taxon>Flavobacteriaceae</taxon>
        <taxon>Flavobacterium</taxon>
    </lineage>
</organism>
<proteinExistence type="inferred from homology"/>
<evidence type="ECO:0000255" key="1">
    <source>
        <dbReference type="HAMAP-Rule" id="MF_02006"/>
    </source>
</evidence>
<accession>A6GW04</accession>
<reference key="1">
    <citation type="journal article" date="2007" name="Nat. Biotechnol.">
        <title>Complete genome sequence of the fish pathogen Flavobacterium psychrophilum.</title>
        <authorList>
            <person name="Duchaud E."/>
            <person name="Boussaha M."/>
            <person name="Loux V."/>
            <person name="Bernardet J.-F."/>
            <person name="Michel C."/>
            <person name="Kerouault B."/>
            <person name="Mondot S."/>
            <person name="Nicolas P."/>
            <person name="Bossy R."/>
            <person name="Caron C."/>
            <person name="Bessieres P."/>
            <person name="Gibrat J.-F."/>
            <person name="Claverol S."/>
            <person name="Dumetz F."/>
            <person name="Le Henaff M."/>
            <person name="Benmansour A."/>
        </authorList>
    </citation>
    <scope>NUCLEOTIDE SEQUENCE [LARGE SCALE GENOMIC DNA]</scope>
    <source>
        <strain>ATCC 49511 / DSM 21280 / CIP 103535 / JIP02/86</strain>
    </source>
</reference>
<feature type="chain" id="PRO_1000216274" description="Tyrosine--tRNA ligase">
    <location>
        <begin position="1"/>
        <end position="431"/>
    </location>
</feature>
<feature type="domain" description="S4 RNA-binding" evidence="1">
    <location>
        <begin position="364"/>
        <end position="431"/>
    </location>
</feature>
<feature type="short sequence motif" description="'HIGH' region">
    <location>
        <begin position="38"/>
        <end position="47"/>
    </location>
</feature>
<feature type="short sequence motif" description="'KMSKS' region">
    <location>
        <begin position="234"/>
        <end position="238"/>
    </location>
</feature>
<feature type="binding site" evidence="1">
    <location>
        <position position="33"/>
    </location>
    <ligand>
        <name>L-tyrosine</name>
        <dbReference type="ChEBI" id="CHEBI:58315"/>
    </ligand>
</feature>
<feature type="binding site" evidence="1">
    <location>
        <position position="172"/>
    </location>
    <ligand>
        <name>L-tyrosine</name>
        <dbReference type="ChEBI" id="CHEBI:58315"/>
    </ligand>
</feature>
<feature type="binding site" evidence="1">
    <location>
        <position position="176"/>
    </location>
    <ligand>
        <name>L-tyrosine</name>
        <dbReference type="ChEBI" id="CHEBI:58315"/>
    </ligand>
</feature>
<feature type="binding site" evidence="1">
    <location>
        <position position="237"/>
    </location>
    <ligand>
        <name>ATP</name>
        <dbReference type="ChEBI" id="CHEBI:30616"/>
    </ligand>
</feature>